<gene>
    <name evidence="1" type="primary">rpoY</name>
    <name type="ordered locus">SPCG_0125</name>
</gene>
<sequence>MIYKVFYQETKERSPRRETTRALYLDIDASSELEGRITARQLVEENRPEYNIEYIELLSDKLLDYEKETGAFEITEF</sequence>
<dbReference type="EC" id="2.7.7.6" evidence="1"/>
<dbReference type="EMBL" id="CP001033">
    <property type="protein sequence ID" value="ACB89377.1"/>
    <property type="molecule type" value="Genomic_DNA"/>
</dbReference>
<dbReference type="RefSeq" id="WP_000639577.1">
    <property type="nucleotide sequence ID" value="NC_010582.1"/>
</dbReference>
<dbReference type="SMR" id="B2IRK6"/>
<dbReference type="KEGG" id="spw:SPCG_0125"/>
<dbReference type="HOGENOM" id="CLU_187518_0_0_9"/>
<dbReference type="GO" id="GO:0000428">
    <property type="term" value="C:DNA-directed RNA polymerase complex"/>
    <property type="evidence" value="ECO:0007669"/>
    <property type="project" value="UniProtKB-KW"/>
</dbReference>
<dbReference type="GO" id="GO:0003677">
    <property type="term" value="F:DNA binding"/>
    <property type="evidence" value="ECO:0007669"/>
    <property type="project" value="UniProtKB-UniRule"/>
</dbReference>
<dbReference type="GO" id="GO:0003899">
    <property type="term" value="F:DNA-directed RNA polymerase activity"/>
    <property type="evidence" value="ECO:0007669"/>
    <property type="project" value="UniProtKB-UniRule"/>
</dbReference>
<dbReference type="GO" id="GO:0006351">
    <property type="term" value="P:DNA-templated transcription"/>
    <property type="evidence" value="ECO:0007669"/>
    <property type="project" value="UniProtKB-UniRule"/>
</dbReference>
<dbReference type="Gene3D" id="3.10.20.730">
    <property type="entry name" value="RNAP, epsilon subunit-like"/>
    <property type="match status" value="1"/>
</dbReference>
<dbReference type="HAMAP" id="MF_01553">
    <property type="entry name" value="RNApol_bact_RpoY"/>
    <property type="match status" value="1"/>
</dbReference>
<dbReference type="InterPro" id="IPR009907">
    <property type="entry name" value="RpoY"/>
</dbReference>
<dbReference type="NCBIfam" id="NF010188">
    <property type="entry name" value="PRK13667.1"/>
    <property type="match status" value="1"/>
</dbReference>
<dbReference type="Pfam" id="PF07288">
    <property type="entry name" value="RpoY"/>
    <property type="match status" value="1"/>
</dbReference>
<feature type="chain" id="PRO_1000199622" description="DNA-directed RNA polymerase subunit epsilon">
    <location>
        <begin position="1"/>
        <end position="77"/>
    </location>
</feature>
<reference key="1">
    <citation type="journal article" date="2009" name="BMC Genomics">
        <title>Genome evolution driven by host adaptations results in a more virulent and antimicrobial-resistant Streptococcus pneumoniae serotype 14.</title>
        <authorList>
            <person name="Ding F."/>
            <person name="Tang P."/>
            <person name="Hsu M.-H."/>
            <person name="Cui P."/>
            <person name="Hu S."/>
            <person name="Yu J."/>
            <person name="Chiu C.-H."/>
        </authorList>
    </citation>
    <scope>NUCLEOTIDE SEQUENCE [LARGE SCALE GENOMIC DNA]</scope>
    <source>
        <strain>CGSP14</strain>
    </source>
</reference>
<proteinExistence type="inferred from homology"/>
<name>RPOY_STRPS</name>
<comment type="function">
    <text evidence="1">A non-essential component of RNA polymerase (RNAP).</text>
</comment>
<comment type="catalytic activity">
    <reaction evidence="1">
        <text>RNA(n) + a ribonucleoside 5'-triphosphate = RNA(n+1) + diphosphate</text>
        <dbReference type="Rhea" id="RHEA:21248"/>
        <dbReference type="Rhea" id="RHEA-COMP:14527"/>
        <dbReference type="Rhea" id="RHEA-COMP:17342"/>
        <dbReference type="ChEBI" id="CHEBI:33019"/>
        <dbReference type="ChEBI" id="CHEBI:61557"/>
        <dbReference type="ChEBI" id="CHEBI:140395"/>
        <dbReference type="EC" id="2.7.7.6"/>
    </reaction>
</comment>
<comment type="subunit">
    <text evidence="1">RNAP is composed of a core of 2 alpha, a beta and a beta' subunit. The core is associated with a delta subunit, and at least one of epsilon or omega. When a sigma factor is associated with the core the holoenzyme is formed, which can initiate transcription.</text>
</comment>
<comment type="similarity">
    <text evidence="1">Belongs to the RNA polymerase subunit epsilon family.</text>
</comment>
<accession>B2IRK6</accession>
<keyword id="KW-0240">DNA-directed RNA polymerase</keyword>
<keyword id="KW-0548">Nucleotidyltransferase</keyword>
<keyword id="KW-0804">Transcription</keyword>
<keyword id="KW-0808">Transferase</keyword>
<evidence type="ECO:0000255" key="1">
    <source>
        <dbReference type="HAMAP-Rule" id="MF_01553"/>
    </source>
</evidence>
<organism>
    <name type="scientific">Streptococcus pneumoniae (strain CGSP14)</name>
    <dbReference type="NCBI Taxonomy" id="516950"/>
    <lineage>
        <taxon>Bacteria</taxon>
        <taxon>Bacillati</taxon>
        <taxon>Bacillota</taxon>
        <taxon>Bacilli</taxon>
        <taxon>Lactobacillales</taxon>
        <taxon>Streptococcaceae</taxon>
        <taxon>Streptococcus</taxon>
    </lineage>
</organism>
<protein>
    <recommendedName>
        <fullName evidence="1">DNA-directed RNA polymerase subunit epsilon</fullName>
        <shortName evidence="1">RNAP epsilon subunit</shortName>
        <ecNumber evidence="1">2.7.7.6</ecNumber>
    </recommendedName>
    <alternativeName>
        <fullName evidence="1">RNA polymerase epsilon subunit</fullName>
    </alternativeName>
    <alternativeName>
        <fullName evidence="1">Transcriptase subunit epsilon</fullName>
    </alternativeName>
</protein>